<evidence type="ECO:0000255" key="1">
    <source>
        <dbReference type="HAMAP-Rule" id="MF_00528"/>
    </source>
</evidence>
<comment type="function">
    <text evidence="1">Nucleoside triphosphate pyrophosphatase that hydrolyzes 7-methyl-GTP (m(7)GTP). May have a dual role in cell division arrest and in preventing the incorporation of modified nucleotides into cellular nucleic acids.</text>
</comment>
<comment type="catalytic activity">
    <reaction evidence="1">
        <text>N(7)-methyl-GTP + H2O = N(7)-methyl-GMP + diphosphate + H(+)</text>
        <dbReference type="Rhea" id="RHEA:58744"/>
        <dbReference type="ChEBI" id="CHEBI:15377"/>
        <dbReference type="ChEBI" id="CHEBI:15378"/>
        <dbReference type="ChEBI" id="CHEBI:33019"/>
        <dbReference type="ChEBI" id="CHEBI:58285"/>
        <dbReference type="ChEBI" id="CHEBI:87133"/>
    </reaction>
</comment>
<comment type="cofactor">
    <cofactor evidence="1">
        <name>a divalent metal cation</name>
        <dbReference type="ChEBI" id="CHEBI:60240"/>
    </cofactor>
</comment>
<comment type="subcellular location">
    <subcellularLocation>
        <location evidence="1">Cytoplasm</location>
    </subcellularLocation>
</comment>
<comment type="similarity">
    <text evidence="1">Belongs to the Maf family. YceF subfamily.</text>
</comment>
<proteinExistence type="inferred from homology"/>
<accession>Q63S79</accession>
<name>NTPPB_BURPS</name>
<sequence>MQHHACSPPRLILASSSRYRRELLERLRVPFDVVAPEIDETPLPDETPCATALRLAAAKARAAAERARAPHGALVIGSDQVATFDGLQIGKPGTHARALAQLQAMRGRDVEFHSALCLYDSRSGATQSEDIVTRVRFRTLTDVELDAYLRAETPYDVAGSAKSEGLGIALLDAIDSDDPTALVGLPLIALTRMLRAAGYPLFGAPAPAADGVNGR</sequence>
<keyword id="KW-0963">Cytoplasm</keyword>
<keyword id="KW-0378">Hydrolase</keyword>
<keyword id="KW-0546">Nucleotide metabolism</keyword>
<keyword id="KW-1185">Reference proteome</keyword>
<gene>
    <name type="ordered locus">BPSL2446</name>
</gene>
<feature type="chain" id="PRO_0000267268" description="7-methyl-GTP pyrophosphatase">
    <location>
        <begin position="1"/>
        <end position="215"/>
    </location>
</feature>
<feature type="active site" description="Proton acceptor" evidence="1">
    <location>
        <position position="79"/>
    </location>
</feature>
<feature type="site" description="Important for substrate specificity" evidence="1">
    <location>
        <position position="19"/>
    </location>
</feature>
<feature type="site" description="Important for substrate specificity" evidence="1">
    <location>
        <position position="80"/>
    </location>
</feature>
<feature type="site" description="Important for substrate specificity" evidence="1">
    <location>
        <position position="164"/>
    </location>
</feature>
<reference key="1">
    <citation type="journal article" date="2004" name="Proc. Natl. Acad. Sci. U.S.A.">
        <title>Genomic plasticity of the causative agent of melioidosis, Burkholderia pseudomallei.</title>
        <authorList>
            <person name="Holden M.T.G."/>
            <person name="Titball R.W."/>
            <person name="Peacock S.J."/>
            <person name="Cerdeno-Tarraga A.-M."/>
            <person name="Atkins T."/>
            <person name="Crossman L.C."/>
            <person name="Pitt T."/>
            <person name="Churcher C."/>
            <person name="Mungall K.L."/>
            <person name="Bentley S.D."/>
            <person name="Sebaihia M."/>
            <person name="Thomson N.R."/>
            <person name="Bason N."/>
            <person name="Beacham I.R."/>
            <person name="Brooks K."/>
            <person name="Brown K.A."/>
            <person name="Brown N.F."/>
            <person name="Challis G.L."/>
            <person name="Cherevach I."/>
            <person name="Chillingworth T."/>
            <person name="Cronin A."/>
            <person name="Crossett B."/>
            <person name="Davis P."/>
            <person name="DeShazer D."/>
            <person name="Feltwell T."/>
            <person name="Fraser A."/>
            <person name="Hance Z."/>
            <person name="Hauser H."/>
            <person name="Holroyd S."/>
            <person name="Jagels K."/>
            <person name="Keith K.E."/>
            <person name="Maddison M."/>
            <person name="Moule S."/>
            <person name="Price C."/>
            <person name="Quail M.A."/>
            <person name="Rabbinowitsch E."/>
            <person name="Rutherford K."/>
            <person name="Sanders M."/>
            <person name="Simmonds M."/>
            <person name="Songsivilai S."/>
            <person name="Stevens K."/>
            <person name="Tumapa S."/>
            <person name="Vesaratchavest M."/>
            <person name="Whitehead S."/>
            <person name="Yeats C."/>
            <person name="Barrell B.G."/>
            <person name="Oyston P.C.F."/>
            <person name="Parkhill J."/>
        </authorList>
    </citation>
    <scope>NUCLEOTIDE SEQUENCE [LARGE SCALE GENOMIC DNA]</scope>
    <source>
        <strain>K96243</strain>
    </source>
</reference>
<protein>
    <recommendedName>
        <fullName evidence="1">7-methyl-GTP pyrophosphatase</fullName>
        <shortName evidence="1">m(7)GTP pyrophosphatase</shortName>
        <ecNumber evidence="1">3.6.1.-</ecNumber>
    </recommendedName>
</protein>
<dbReference type="EC" id="3.6.1.-" evidence="1"/>
<dbReference type="EMBL" id="BX571965">
    <property type="protein sequence ID" value="CAH36449.1"/>
    <property type="molecule type" value="Genomic_DNA"/>
</dbReference>
<dbReference type="RefSeq" id="WP_004192535.1">
    <property type="nucleotide sequence ID" value="NZ_CP009538.1"/>
</dbReference>
<dbReference type="RefSeq" id="YP_109038.1">
    <property type="nucleotide sequence ID" value="NC_006350.1"/>
</dbReference>
<dbReference type="SMR" id="Q63S79"/>
<dbReference type="STRING" id="272560.BPSL2446"/>
<dbReference type="KEGG" id="bps:BPSL2446"/>
<dbReference type="PATRIC" id="fig|272560.51.peg.2944"/>
<dbReference type="eggNOG" id="COG0424">
    <property type="taxonomic scope" value="Bacteria"/>
</dbReference>
<dbReference type="Proteomes" id="UP000000605">
    <property type="component" value="Chromosome 1"/>
</dbReference>
<dbReference type="GO" id="GO:0005737">
    <property type="term" value="C:cytoplasm"/>
    <property type="evidence" value="ECO:0007669"/>
    <property type="project" value="UniProtKB-SubCell"/>
</dbReference>
<dbReference type="GO" id="GO:0047429">
    <property type="term" value="F:nucleoside triphosphate diphosphatase activity"/>
    <property type="evidence" value="ECO:0007669"/>
    <property type="project" value="InterPro"/>
</dbReference>
<dbReference type="GO" id="GO:0009117">
    <property type="term" value="P:nucleotide metabolic process"/>
    <property type="evidence" value="ECO:0007669"/>
    <property type="project" value="UniProtKB-KW"/>
</dbReference>
<dbReference type="CDD" id="cd00555">
    <property type="entry name" value="Maf"/>
    <property type="match status" value="1"/>
</dbReference>
<dbReference type="Gene3D" id="3.90.950.10">
    <property type="match status" value="1"/>
</dbReference>
<dbReference type="HAMAP" id="MF_00528">
    <property type="entry name" value="Maf"/>
    <property type="match status" value="1"/>
</dbReference>
<dbReference type="InterPro" id="IPR029001">
    <property type="entry name" value="ITPase-like_fam"/>
</dbReference>
<dbReference type="InterPro" id="IPR003697">
    <property type="entry name" value="Maf-like"/>
</dbReference>
<dbReference type="NCBIfam" id="TIGR00172">
    <property type="entry name" value="maf"/>
    <property type="match status" value="1"/>
</dbReference>
<dbReference type="PANTHER" id="PTHR43213">
    <property type="entry name" value="BIFUNCTIONAL DTTP/UTP PYROPHOSPHATASE/METHYLTRANSFERASE PROTEIN-RELATED"/>
    <property type="match status" value="1"/>
</dbReference>
<dbReference type="PANTHER" id="PTHR43213:SF5">
    <property type="entry name" value="BIFUNCTIONAL DTTP_UTP PYROPHOSPHATASE_METHYLTRANSFERASE PROTEIN-RELATED"/>
    <property type="match status" value="1"/>
</dbReference>
<dbReference type="Pfam" id="PF02545">
    <property type="entry name" value="Maf"/>
    <property type="match status" value="1"/>
</dbReference>
<dbReference type="PIRSF" id="PIRSF006305">
    <property type="entry name" value="Maf"/>
    <property type="match status" value="1"/>
</dbReference>
<dbReference type="SUPFAM" id="SSF52972">
    <property type="entry name" value="ITPase-like"/>
    <property type="match status" value="1"/>
</dbReference>
<organism>
    <name type="scientific">Burkholderia pseudomallei (strain K96243)</name>
    <dbReference type="NCBI Taxonomy" id="272560"/>
    <lineage>
        <taxon>Bacteria</taxon>
        <taxon>Pseudomonadati</taxon>
        <taxon>Pseudomonadota</taxon>
        <taxon>Betaproteobacteria</taxon>
        <taxon>Burkholderiales</taxon>
        <taxon>Burkholderiaceae</taxon>
        <taxon>Burkholderia</taxon>
        <taxon>pseudomallei group</taxon>
    </lineage>
</organism>